<reference key="1">
    <citation type="submission" date="2008-05" db="EMBL/GenBank/DDBJ databases">
        <title>Complete sequence of Shigella boydii serotype 18 strain BS512.</title>
        <authorList>
            <person name="Rasko D.A."/>
            <person name="Rosovitz M."/>
            <person name="Maurelli A.T."/>
            <person name="Myers G."/>
            <person name="Seshadri R."/>
            <person name="Cer R."/>
            <person name="Jiang L."/>
            <person name="Ravel J."/>
            <person name="Sebastian Y."/>
        </authorList>
    </citation>
    <scope>NUCLEOTIDE SEQUENCE [LARGE SCALE GENOMIC DNA]</scope>
    <source>
        <strain>CDC 3083-94 / BS512</strain>
    </source>
</reference>
<keyword id="KW-0028">Amino-acid biosynthesis</keyword>
<keyword id="KW-0963">Cytoplasm</keyword>
<keyword id="KW-0220">Diaminopimelate biosynthesis</keyword>
<keyword id="KW-0456">Lyase</keyword>
<keyword id="KW-0457">Lysine biosynthesis</keyword>
<keyword id="KW-1185">Reference proteome</keyword>
<keyword id="KW-0704">Schiff base</keyword>
<organism>
    <name type="scientific">Shigella boydii serotype 18 (strain CDC 3083-94 / BS512)</name>
    <dbReference type="NCBI Taxonomy" id="344609"/>
    <lineage>
        <taxon>Bacteria</taxon>
        <taxon>Pseudomonadati</taxon>
        <taxon>Pseudomonadota</taxon>
        <taxon>Gammaproteobacteria</taxon>
        <taxon>Enterobacterales</taxon>
        <taxon>Enterobacteriaceae</taxon>
        <taxon>Shigella</taxon>
    </lineage>
</organism>
<sequence>MFTGSIVAIVTPMDEKGNVCRASLKKLIDYHVASGTSAIVSVGTTGESATLNHDEHADVVMMTLELADGRIPVIAGTGANATAEAISLTQRFNDSGIVGCLTVTPYYNRPSQEGLYQHFKAIAEHTDLPQILYNVPSRTGCDLLPETVGRLAKVKNIIGIKEATGNLTRVNQIKELVSDDFVLLSGDDASALDFMQLGGHGVISVTANVAARDMAQMCKLAAEGHFAEARVINQRLMPLHNKLFVEPNPIPVKWACKELGLVATDTLRLPMTPITDSGRETVRAALKHAGLL</sequence>
<evidence type="ECO:0000255" key="1">
    <source>
        <dbReference type="HAMAP-Rule" id="MF_00418"/>
    </source>
</evidence>
<evidence type="ECO:0000305" key="2"/>
<name>DAPA_SHIB3</name>
<feature type="chain" id="PRO_1000124065" description="4-hydroxy-tetrahydrodipicolinate synthase">
    <location>
        <begin position="1"/>
        <end position="292"/>
    </location>
</feature>
<feature type="active site" description="Proton donor/acceptor" evidence="1">
    <location>
        <position position="133"/>
    </location>
</feature>
<feature type="active site" description="Schiff-base intermediate with substrate" evidence="1">
    <location>
        <position position="161"/>
    </location>
</feature>
<feature type="binding site" evidence="1">
    <location>
        <position position="45"/>
    </location>
    <ligand>
        <name>pyruvate</name>
        <dbReference type="ChEBI" id="CHEBI:15361"/>
    </ligand>
</feature>
<feature type="binding site" evidence="1">
    <location>
        <position position="203"/>
    </location>
    <ligand>
        <name>pyruvate</name>
        <dbReference type="ChEBI" id="CHEBI:15361"/>
    </ligand>
</feature>
<feature type="site" description="Part of a proton relay during catalysis" evidence="1">
    <location>
        <position position="44"/>
    </location>
</feature>
<feature type="site" description="Part of a proton relay during catalysis" evidence="1">
    <location>
        <position position="107"/>
    </location>
</feature>
<gene>
    <name evidence="1" type="primary">dapA</name>
    <name type="ordered locus">SbBS512_E2850</name>
</gene>
<proteinExistence type="inferred from homology"/>
<protein>
    <recommendedName>
        <fullName evidence="1">4-hydroxy-tetrahydrodipicolinate synthase</fullName>
        <shortName evidence="1">HTPA synthase</shortName>
        <ecNumber evidence="1">4.3.3.7</ecNumber>
    </recommendedName>
</protein>
<dbReference type="EC" id="4.3.3.7" evidence="1"/>
<dbReference type="EMBL" id="CP001063">
    <property type="protein sequence ID" value="ACD08462.1"/>
    <property type="molecule type" value="Genomic_DNA"/>
</dbReference>
<dbReference type="RefSeq" id="WP_001295469.1">
    <property type="nucleotide sequence ID" value="NC_010658.1"/>
</dbReference>
<dbReference type="SMR" id="B2TXQ4"/>
<dbReference type="STRING" id="344609.SbBS512_E2850"/>
<dbReference type="GeneID" id="93774660"/>
<dbReference type="KEGG" id="sbc:SbBS512_E2850"/>
<dbReference type="HOGENOM" id="CLU_049343_7_1_6"/>
<dbReference type="UniPathway" id="UPA00034">
    <property type="reaction ID" value="UER00017"/>
</dbReference>
<dbReference type="Proteomes" id="UP000001030">
    <property type="component" value="Chromosome"/>
</dbReference>
<dbReference type="GO" id="GO:0005829">
    <property type="term" value="C:cytosol"/>
    <property type="evidence" value="ECO:0007669"/>
    <property type="project" value="TreeGrafter"/>
</dbReference>
<dbReference type="GO" id="GO:0008840">
    <property type="term" value="F:4-hydroxy-tetrahydrodipicolinate synthase activity"/>
    <property type="evidence" value="ECO:0007669"/>
    <property type="project" value="UniProtKB-UniRule"/>
</dbReference>
<dbReference type="GO" id="GO:0019877">
    <property type="term" value="P:diaminopimelate biosynthetic process"/>
    <property type="evidence" value="ECO:0007669"/>
    <property type="project" value="UniProtKB-UniRule"/>
</dbReference>
<dbReference type="GO" id="GO:0009089">
    <property type="term" value="P:lysine biosynthetic process via diaminopimelate"/>
    <property type="evidence" value="ECO:0007669"/>
    <property type="project" value="UniProtKB-UniRule"/>
</dbReference>
<dbReference type="CDD" id="cd00950">
    <property type="entry name" value="DHDPS"/>
    <property type="match status" value="1"/>
</dbReference>
<dbReference type="FunFam" id="3.20.20.70:FF:000046">
    <property type="entry name" value="4-hydroxy-tetrahydrodipicolinate synthase"/>
    <property type="match status" value="1"/>
</dbReference>
<dbReference type="Gene3D" id="3.20.20.70">
    <property type="entry name" value="Aldolase class I"/>
    <property type="match status" value="1"/>
</dbReference>
<dbReference type="HAMAP" id="MF_00418">
    <property type="entry name" value="DapA"/>
    <property type="match status" value="1"/>
</dbReference>
<dbReference type="InterPro" id="IPR013785">
    <property type="entry name" value="Aldolase_TIM"/>
</dbReference>
<dbReference type="InterPro" id="IPR005263">
    <property type="entry name" value="DapA"/>
</dbReference>
<dbReference type="InterPro" id="IPR002220">
    <property type="entry name" value="DapA-like"/>
</dbReference>
<dbReference type="InterPro" id="IPR020625">
    <property type="entry name" value="Schiff_base-form_aldolases_AS"/>
</dbReference>
<dbReference type="InterPro" id="IPR020624">
    <property type="entry name" value="Schiff_base-form_aldolases_CS"/>
</dbReference>
<dbReference type="NCBIfam" id="TIGR00674">
    <property type="entry name" value="dapA"/>
    <property type="match status" value="1"/>
</dbReference>
<dbReference type="PANTHER" id="PTHR12128:SF66">
    <property type="entry name" value="4-HYDROXY-2-OXOGLUTARATE ALDOLASE, MITOCHONDRIAL"/>
    <property type="match status" value="1"/>
</dbReference>
<dbReference type="PANTHER" id="PTHR12128">
    <property type="entry name" value="DIHYDRODIPICOLINATE SYNTHASE"/>
    <property type="match status" value="1"/>
</dbReference>
<dbReference type="Pfam" id="PF00701">
    <property type="entry name" value="DHDPS"/>
    <property type="match status" value="1"/>
</dbReference>
<dbReference type="PIRSF" id="PIRSF001365">
    <property type="entry name" value="DHDPS"/>
    <property type="match status" value="1"/>
</dbReference>
<dbReference type="PRINTS" id="PR00146">
    <property type="entry name" value="DHPICSNTHASE"/>
</dbReference>
<dbReference type="SMART" id="SM01130">
    <property type="entry name" value="DHDPS"/>
    <property type="match status" value="1"/>
</dbReference>
<dbReference type="SUPFAM" id="SSF51569">
    <property type="entry name" value="Aldolase"/>
    <property type="match status" value="1"/>
</dbReference>
<dbReference type="PROSITE" id="PS00665">
    <property type="entry name" value="DHDPS_1"/>
    <property type="match status" value="1"/>
</dbReference>
<dbReference type="PROSITE" id="PS00666">
    <property type="entry name" value="DHDPS_2"/>
    <property type="match status" value="1"/>
</dbReference>
<comment type="function">
    <text evidence="1">Catalyzes the condensation of (S)-aspartate-beta-semialdehyde [(S)-ASA] and pyruvate to 4-hydroxy-tetrahydrodipicolinate (HTPA).</text>
</comment>
<comment type="catalytic activity">
    <reaction evidence="1">
        <text>L-aspartate 4-semialdehyde + pyruvate = (2S,4S)-4-hydroxy-2,3,4,5-tetrahydrodipicolinate + H2O + H(+)</text>
        <dbReference type="Rhea" id="RHEA:34171"/>
        <dbReference type="ChEBI" id="CHEBI:15361"/>
        <dbReference type="ChEBI" id="CHEBI:15377"/>
        <dbReference type="ChEBI" id="CHEBI:15378"/>
        <dbReference type="ChEBI" id="CHEBI:67139"/>
        <dbReference type="ChEBI" id="CHEBI:537519"/>
        <dbReference type="EC" id="4.3.3.7"/>
    </reaction>
</comment>
<comment type="pathway">
    <text evidence="1">Amino-acid biosynthesis; L-lysine biosynthesis via DAP pathway; (S)-tetrahydrodipicolinate from L-aspartate: step 3/4.</text>
</comment>
<comment type="subunit">
    <text evidence="1">Homotetramer; dimer of dimers.</text>
</comment>
<comment type="subcellular location">
    <subcellularLocation>
        <location evidence="1">Cytoplasm</location>
    </subcellularLocation>
</comment>
<comment type="similarity">
    <text evidence="1">Belongs to the DapA family.</text>
</comment>
<comment type="caution">
    <text evidence="2">Was originally thought to be a dihydrodipicolinate synthase (DHDPS), catalyzing the condensation of (S)-aspartate-beta-semialdehyde [(S)-ASA] and pyruvate to dihydrodipicolinate (DHDP). However, it was shown in E.coli that the product of the enzymatic reaction is not dihydrodipicolinate but in fact (4S)-4-hydroxy-2,3,4,5-tetrahydro-(2S)-dipicolinic acid (HTPA), and that the consecutive dehydration reaction leading to DHDP is not spontaneous but catalyzed by DapB.</text>
</comment>
<accession>B2TXQ4</accession>